<comment type="function">
    <text evidence="1">Probable component of the endoplasmic reticulum-associated degradation (ERAD) pathway.</text>
</comment>
<comment type="similarity">
    <text evidence="4">Belongs to the LCL2 family.</text>
</comment>
<accession>C7Z403</accession>
<organism>
    <name type="scientific">Fusarium vanettenii (strain ATCC MYA-4622 / CBS 123669 / FGSC 9596 / NRRL 45880 / 77-13-4)</name>
    <name type="common">Fusarium solani subsp. pisi</name>
    <dbReference type="NCBI Taxonomy" id="660122"/>
    <lineage>
        <taxon>Eukaryota</taxon>
        <taxon>Fungi</taxon>
        <taxon>Dikarya</taxon>
        <taxon>Ascomycota</taxon>
        <taxon>Pezizomycotina</taxon>
        <taxon>Sordariomycetes</taxon>
        <taxon>Hypocreomycetidae</taxon>
        <taxon>Hypocreales</taxon>
        <taxon>Nectriaceae</taxon>
        <taxon>Fusarium</taxon>
        <taxon>Fusarium solani species complex</taxon>
        <taxon>Fusarium vanettenii</taxon>
    </lineage>
</organism>
<feature type="signal peptide" evidence="2">
    <location>
        <begin position="1"/>
        <end position="16"/>
    </location>
</feature>
<feature type="chain" id="PRO_0000408613" description="Long chronological lifespan protein 2">
    <location>
        <begin position="17"/>
        <end position="119"/>
    </location>
</feature>
<feature type="region of interest" description="Disordered" evidence="3">
    <location>
        <begin position="29"/>
        <end position="48"/>
    </location>
</feature>
<name>LCL2_FUSV7</name>
<dbReference type="EMBL" id="GG698909">
    <property type="protein sequence ID" value="EEU41396.1"/>
    <property type="molecule type" value="Genomic_DNA"/>
</dbReference>
<dbReference type="RefSeq" id="XP_003047109.1">
    <property type="nucleotide sequence ID" value="XM_003047063.1"/>
</dbReference>
<dbReference type="STRING" id="660122.C7Z403"/>
<dbReference type="EnsemblFungi" id="NechaT83432">
    <property type="protein sequence ID" value="NechaP83432"/>
    <property type="gene ID" value="NechaG83432"/>
</dbReference>
<dbReference type="GeneID" id="9678682"/>
<dbReference type="KEGG" id="nhe:NECHADRAFT_83432"/>
<dbReference type="VEuPathDB" id="FungiDB:NECHADRAFT_83432"/>
<dbReference type="eggNOG" id="ENOG502S416">
    <property type="taxonomic scope" value="Eukaryota"/>
</dbReference>
<dbReference type="HOGENOM" id="CLU_142363_0_0_1"/>
<dbReference type="InParanoid" id="C7Z403"/>
<dbReference type="OMA" id="DNYLCPD"/>
<dbReference type="OrthoDB" id="2234316at2759"/>
<dbReference type="Proteomes" id="UP000005206">
    <property type="component" value="Chromosome 8"/>
</dbReference>
<dbReference type="GO" id="GO:0036503">
    <property type="term" value="P:ERAD pathway"/>
    <property type="evidence" value="ECO:0007669"/>
    <property type="project" value="TreeGrafter"/>
</dbReference>
<dbReference type="CDD" id="cd23996">
    <property type="entry name" value="LCL2-like"/>
    <property type="match status" value="1"/>
</dbReference>
<dbReference type="InterPro" id="IPR034543">
    <property type="entry name" value="LCL2"/>
</dbReference>
<dbReference type="PANTHER" id="PTHR38425">
    <property type="entry name" value="LONG CHRONOLOGICAL LIFESPAN PROTEIN 2"/>
    <property type="match status" value="1"/>
</dbReference>
<dbReference type="PANTHER" id="PTHR38425:SF1">
    <property type="entry name" value="LONG CHRONOLOGICAL LIFESPAN PROTEIN 2"/>
    <property type="match status" value="1"/>
</dbReference>
<sequence>MRYLIAILSLLSLANAQFGGFFDQMFGQQGGHEQHHGQPQNNPSDASHYRHQYDNSVCDKYLCPDTLACVHFPHHCPCAWDAQQEKFELAEGQRMCVSRGGFREGETARKLELARKGLL</sequence>
<gene>
    <name type="primary">LCL2</name>
    <name type="ORF">NECHADRAFT_83432</name>
</gene>
<proteinExistence type="inferred from homology"/>
<protein>
    <recommendedName>
        <fullName>Long chronological lifespan protein 2</fullName>
    </recommendedName>
</protein>
<reference key="1">
    <citation type="journal article" date="2009" name="PLoS Genet.">
        <title>The genome of Nectria haematococca: contribution of supernumerary chromosomes to gene expansion.</title>
        <authorList>
            <person name="Coleman J.J."/>
            <person name="Rounsley S.D."/>
            <person name="Rodriguez-Carres M."/>
            <person name="Kuo A."/>
            <person name="Wasmann C.C."/>
            <person name="Grimwood J."/>
            <person name="Schmutz J."/>
            <person name="Taga M."/>
            <person name="White G.J."/>
            <person name="Zhou S."/>
            <person name="Schwartz D.C."/>
            <person name="Freitag M."/>
            <person name="Ma L.-J."/>
            <person name="Danchin E.G.J."/>
            <person name="Henrissat B."/>
            <person name="Coutinho P.M."/>
            <person name="Nelson D.R."/>
            <person name="Straney D."/>
            <person name="Napoli C.A."/>
            <person name="Barker B.M."/>
            <person name="Gribskov M."/>
            <person name="Rep M."/>
            <person name="Kroken S."/>
            <person name="Molnar I."/>
            <person name="Rensing C."/>
            <person name="Kennell J.C."/>
            <person name="Zamora J."/>
            <person name="Farman M.L."/>
            <person name="Selker E.U."/>
            <person name="Salamov A."/>
            <person name="Shapiro H."/>
            <person name="Pangilinan J."/>
            <person name="Lindquist E."/>
            <person name="Lamers C."/>
            <person name="Grigoriev I.V."/>
            <person name="Geiser D.M."/>
            <person name="Covert S.F."/>
            <person name="Temporini E."/>
            <person name="VanEtten H.D."/>
        </authorList>
    </citation>
    <scope>NUCLEOTIDE SEQUENCE [LARGE SCALE GENOMIC DNA]</scope>
    <source>
        <strain>ATCC MYA-4622 / CBS 123669 / FGSC 9596 / NRRL 45880 / 77-13-4</strain>
    </source>
</reference>
<evidence type="ECO:0000250" key="1"/>
<evidence type="ECO:0000255" key="2"/>
<evidence type="ECO:0000256" key="3">
    <source>
        <dbReference type="SAM" id="MobiDB-lite"/>
    </source>
</evidence>
<evidence type="ECO:0000305" key="4"/>
<keyword id="KW-1185">Reference proteome</keyword>
<keyword id="KW-0732">Signal</keyword>